<organism>
    <name type="scientific">Coccidioides immitis (strain RS)</name>
    <name type="common">Valley fever fungus</name>
    <dbReference type="NCBI Taxonomy" id="246410"/>
    <lineage>
        <taxon>Eukaryota</taxon>
        <taxon>Fungi</taxon>
        <taxon>Dikarya</taxon>
        <taxon>Ascomycota</taxon>
        <taxon>Pezizomycotina</taxon>
        <taxon>Eurotiomycetes</taxon>
        <taxon>Eurotiomycetidae</taxon>
        <taxon>Onygenales</taxon>
        <taxon>Onygenaceae</taxon>
        <taxon>Coccidioides</taxon>
    </lineage>
</organism>
<dbReference type="EC" id="1.1.1.17"/>
<dbReference type="EMBL" id="GG704913">
    <property type="protein sequence ID" value="EAS29161.3"/>
    <property type="status" value="ALT_SEQ"/>
    <property type="molecule type" value="Genomic_DNA"/>
</dbReference>
<dbReference type="RefSeq" id="XP_001240744.1">
    <property type="nucleotide sequence ID" value="XM_001240743.2"/>
</dbReference>
<dbReference type="SMR" id="Q1DP56"/>
<dbReference type="STRING" id="246410.Q1DP56"/>
<dbReference type="GeneID" id="4559749"/>
<dbReference type="KEGG" id="cim:CIMG_07907"/>
<dbReference type="InParanoid" id="Q1DP56"/>
<dbReference type="OrthoDB" id="418169at2759"/>
<dbReference type="Proteomes" id="UP000001261">
    <property type="component" value="Unassembled WGS sequence"/>
</dbReference>
<dbReference type="GO" id="GO:0005829">
    <property type="term" value="C:cytosol"/>
    <property type="evidence" value="ECO:0007669"/>
    <property type="project" value="TreeGrafter"/>
</dbReference>
<dbReference type="GO" id="GO:0008926">
    <property type="term" value="F:mannitol-1-phosphate 5-dehydrogenase activity"/>
    <property type="evidence" value="ECO:0007669"/>
    <property type="project" value="UniProtKB-EC"/>
</dbReference>
<dbReference type="GO" id="GO:0019592">
    <property type="term" value="P:mannitol catabolic process"/>
    <property type="evidence" value="ECO:0007669"/>
    <property type="project" value="TreeGrafter"/>
</dbReference>
<dbReference type="FunFam" id="3.40.50.720:FF:000316">
    <property type="entry name" value="Mannitol-1-phosphate 5-dehydrogenase"/>
    <property type="match status" value="1"/>
</dbReference>
<dbReference type="Gene3D" id="1.10.1040.10">
    <property type="entry name" value="N-(1-d-carboxylethyl)-l-norvaline Dehydrogenase, domain 2"/>
    <property type="match status" value="1"/>
</dbReference>
<dbReference type="Gene3D" id="3.40.50.720">
    <property type="entry name" value="NAD(P)-binding Rossmann-like Domain"/>
    <property type="match status" value="1"/>
</dbReference>
<dbReference type="HAMAP" id="MF_00196">
    <property type="entry name" value="Mannitol_dehydrog"/>
    <property type="match status" value="1"/>
</dbReference>
<dbReference type="InterPro" id="IPR008927">
    <property type="entry name" value="6-PGluconate_DH-like_C_sf"/>
</dbReference>
<dbReference type="InterPro" id="IPR013328">
    <property type="entry name" value="6PGD_dom2"/>
</dbReference>
<dbReference type="InterPro" id="IPR023028">
    <property type="entry name" value="Mannitol_1_phos_5_DH"/>
</dbReference>
<dbReference type="InterPro" id="IPR000669">
    <property type="entry name" value="Mannitol_DH"/>
</dbReference>
<dbReference type="InterPro" id="IPR013118">
    <property type="entry name" value="Mannitol_DH_C"/>
</dbReference>
<dbReference type="InterPro" id="IPR013131">
    <property type="entry name" value="Mannitol_DH_N"/>
</dbReference>
<dbReference type="InterPro" id="IPR036291">
    <property type="entry name" value="NAD(P)-bd_dom_sf"/>
</dbReference>
<dbReference type="NCBIfam" id="NF002652">
    <property type="entry name" value="PRK02318.2-5"/>
    <property type="match status" value="1"/>
</dbReference>
<dbReference type="PANTHER" id="PTHR30524:SF0">
    <property type="entry name" value="ALTRONATE OXIDOREDUCTASE-RELATED"/>
    <property type="match status" value="1"/>
</dbReference>
<dbReference type="PANTHER" id="PTHR30524">
    <property type="entry name" value="MANNITOL-1-PHOSPHATE 5-DEHYDROGENASE"/>
    <property type="match status" value="1"/>
</dbReference>
<dbReference type="Pfam" id="PF01232">
    <property type="entry name" value="Mannitol_dh"/>
    <property type="match status" value="1"/>
</dbReference>
<dbReference type="Pfam" id="PF08125">
    <property type="entry name" value="Mannitol_dh_C"/>
    <property type="match status" value="1"/>
</dbReference>
<dbReference type="PRINTS" id="PR00084">
    <property type="entry name" value="MTLDHDRGNASE"/>
</dbReference>
<dbReference type="SUPFAM" id="SSF48179">
    <property type="entry name" value="6-phosphogluconate dehydrogenase C-terminal domain-like"/>
    <property type="match status" value="1"/>
</dbReference>
<dbReference type="SUPFAM" id="SSF51735">
    <property type="entry name" value="NAD(P)-binding Rossmann-fold domains"/>
    <property type="match status" value="1"/>
</dbReference>
<gene>
    <name type="ORF">CIMG_07907</name>
</gene>
<evidence type="ECO:0000250" key="1"/>
<evidence type="ECO:0000305" key="2"/>
<name>MTLD_COCIM</name>
<proteinExistence type="inferred from homology"/>
<protein>
    <recommendedName>
        <fullName>Mannitol-1-phosphate 5-dehydrogenase</fullName>
        <shortName>M1PDH</shortName>
        <shortName>MPD</shortName>
        <shortName>MPDH</shortName>
        <ecNumber>1.1.1.17</ecNumber>
    </recommendedName>
</protein>
<keyword id="KW-0520">NAD</keyword>
<keyword id="KW-0560">Oxidoreductase</keyword>
<keyword id="KW-1185">Reference proteome</keyword>
<accession>Q1DP56</accession>
<accession>I9NR89</accession>
<sequence length="388" mass="42928">MGKKAVHFGGGNIGRGFVGEFLHESDYEVVFVDVMDSIIDALQGASSYKVTEVSNEGEHTKTVTNYRAINSKHNLDQVISEISTADVVTCAVGPNILKFIAPPIAKGIDARTIERPLAVVACENAIGATDTLHKFVKENTDPSRVESLSSRARFANSAIDRIVPTQDPDSGLDVKIEKFYEWVVEKTPFGEWGHPDIQAILWVDNLDPYIERKLYTVNTGHATAAYYGYNMGKKTIYESMSDEKIRGHVRDALSETSTLIVDKYGIPAQEQRKYVDAIVARISNPHLEDVVERVGRAPLRKLGRKERFVGPASQLAERGKKVDALLGAMEQALRFQNVLEDDESFELAKILKTESAEDATAKLTGLESDHPLFARVVERVAKVQKGPK</sequence>
<reference key="1">
    <citation type="journal article" date="2009" name="Genome Res.">
        <title>Comparative genomic analyses of the human fungal pathogens Coccidioides and their relatives.</title>
        <authorList>
            <person name="Sharpton T.J."/>
            <person name="Stajich J.E."/>
            <person name="Rounsley S.D."/>
            <person name="Gardner M.J."/>
            <person name="Wortman J.R."/>
            <person name="Jordar V.S."/>
            <person name="Maiti R."/>
            <person name="Kodira C.D."/>
            <person name="Neafsey D.E."/>
            <person name="Zeng Q."/>
            <person name="Hung C.-Y."/>
            <person name="McMahan C."/>
            <person name="Muszewska A."/>
            <person name="Grynberg M."/>
            <person name="Mandel M.A."/>
            <person name="Kellner E.M."/>
            <person name="Barker B.M."/>
            <person name="Galgiani J.N."/>
            <person name="Orbach M.J."/>
            <person name="Kirkland T.N."/>
            <person name="Cole G.T."/>
            <person name="Henn M.R."/>
            <person name="Birren B.W."/>
            <person name="Taylor J.W."/>
        </authorList>
    </citation>
    <scope>NUCLEOTIDE SEQUENCE [LARGE SCALE GENOMIC DNA]</scope>
    <source>
        <strain>RS</strain>
    </source>
</reference>
<reference key="2">
    <citation type="journal article" date="2010" name="Genome Res.">
        <title>Population genomic sequencing of Coccidioides fungi reveals recent hybridization and transposon control.</title>
        <authorList>
            <person name="Neafsey D.E."/>
            <person name="Barker B.M."/>
            <person name="Sharpton T.J."/>
            <person name="Stajich J.E."/>
            <person name="Park D.J."/>
            <person name="Whiston E."/>
            <person name="Hung C.-Y."/>
            <person name="McMahan C."/>
            <person name="White J."/>
            <person name="Sykes S."/>
            <person name="Heiman D."/>
            <person name="Young S."/>
            <person name="Zeng Q."/>
            <person name="Abouelleil A."/>
            <person name="Aftuck L."/>
            <person name="Bessette D."/>
            <person name="Brown A."/>
            <person name="FitzGerald M."/>
            <person name="Lui A."/>
            <person name="Macdonald J.P."/>
            <person name="Priest M."/>
            <person name="Orbach M.J."/>
            <person name="Galgiani J.N."/>
            <person name="Kirkland T.N."/>
            <person name="Cole G.T."/>
            <person name="Birren B.W."/>
            <person name="Henn M.R."/>
            <person name="Taylor J.W."/>
            <person name="Rounsley S.D."/>
        </authorList>
    </citation>
    <scope>GENOME REANNOTATION</scope>
    <source>
        <strain>RS</strain>
    </source>
</reference>
<feature type="chain" id="PRO_0000371526" description="Mannitol-1-phosphate 5-dehydrogenase">
    <location>
        <begin position="1"/>
        <end position="388"/>
    </location>
</feature>
<feature type="active site" evidence="1">
    <location>
        <position position="213"/>
    </location>
</feature>
<feature type="binding site" evidence="1">
    <location>
        <begin position="5"/>
        <end position="16"/>
    </location>
    <ligand>
        <name>NAD(+)</name>
        <dbReference type="ChEBI" id="CHEBI:57540"/>
    </ligand>
</feature>
<comment type="function">
    <text evidence="1">Catalyzes the NAD(H)-dependent interconversion of D-fructose 6-phosphate and D-mannitol 1-phosphate in the mannitol metabolic pathway.</text>
</comment>
<comment type="catalytic activity">
    <reaction>
        <text>D-mannitol 1-phosphate + NAD(+) = beta-D-fructose 6-phosphate + NADH + H(+)</text>
        <dbReference type="Rhea" id="RHEA:19661"/>
        <dbReference type="ChEBI" id="CHEBI:15378"/>
        <dbReference type="ChEBI" id="CHEBI:57540"/>
        <dbReference type="ChEBI" id="CHEBI:57634"/>
        <dbReference type="ChEBI" id="CHEBI:57945"/>
        <dbReference type="ChEBI" id="CHEBI:61381"/>
        <dbReference type="EC" id="1.1.1.17"/>
    </reaction>
</comment>
<comment type="subunit">
    <text evidence="1">Monomer.</text>
</comment>
<comment type="similarity">
    <text evidence="2">Belongs to the mannitol dehydrogenase family.</text>
</comment>
<comment type="sequence caution" evidence="2">
    <conflict type="erroneous gene model prediction">
        <sequence resource="EMBL-CDS" id="EAS29161"/>
    </conflict>
</comment>